<organism>
    <name type="scientific">Mycobacterium sp. (strain MCS)</name>
    <dbReference type="NCBI Taxonomy" id="164756"/>
    <lineage>
        <taxon>Bacteria</taxon>
        <taxon>Bacillati</taxon>
        <taxon>Actinomycetota</taxon>
        <taxon>Actinomycetes</taxon>
        <taxon>Mycobacteriales</taxon>
        <taxon>Mycobacteriaceae</taxon>
        <taxon>Mycobacterium</taxon>
    </lineage>
</organism>
<proteinExistence type="inferred from homology"/>
<sequence>MQPGGQPDMSALLAQAQQMQQQLMEAQESLANSEVHGQAGGGLVQVTMKGSGEVTSVAIDPKVVDPDDVETLQDLVVGAIADAAKQVTILAHDRLGPLAGGMGGLGIPGL</sequence>
<accession>Q1B276</accession>
<keyword id="KW-0963">Cytoplasm</keyword>
<keyword id="KW-0238">DNA-binding</keyword>
<protein>
    <recommendedName>
        <fullName evidence="1">Nucleoid-associated protein Mmcs_4904</fullName>
    </recommendedName>
</protein>
<dbReference type="EMBL" id="CP000384">
    <property type="protein sequence ID" value="ABG11008.1"/>
    <property type="molecule type" value="Genomic_DNA"/>
</dbReference>
<dbReference type="SMR" id="Q1B276"/>
<dbReference type="KEGG" id="mmc:Mmcs_4904"/>
<dbReference type="HOGENOM" id="CLU_140930_4_0_11"/>
<dbReference type="BioCyc" id="MSP164756:G1G6O-5012-MONOMER"/>
<dbReference type="GO" id="GO:0043590">
    <property type="term" value="C:bacterial nucleoid"/>
    <property type="evidence" value="ECO:0007669"/>
    <property type="project" value="UniProtKB-UniRule"/>
</dbReference>
<dbReference type="GO" id="GO:0005829">
    <property type="term" value="C:cytosol"/>
    <property type="evidence" value="ECO:0007669"/>
    <property type="project" value="TreeGrafter"/>
</dbReference>
<dbReference type="GO" id="GO:0003677">
    <property type="term" value="F:DNA binding"/>
    <property type="evidence" value="ECO:0007669"/>
    <property type="project" value="UniProtKB-UniRule"/>
</dbReference>
<dbReference type="FunFam" id="3.30.1310.10:FF:000003">
    <property type="entry name" value="Nucleoid-associated protein MRA_3753"/>
    <property type="match status" value="1"/>
</dbReference>
<dbReference type="Gene3D" id="3.30.1310.10">
    <property type="entry name" value="Nucleoid-associated protein YbaB-like domain"/>
    <property type="match status" value="1"/>
</dbReference>
<dbReference type="HAMAP" id="MF_00274">
    <property type="entry name" value="DNA_YbaB_EbfC"/>
    <property type="match status" value="1"/>
</dbReference>
<dbReference type="InterPro" id="IPR036894">
    <property type="entry name" value="YbaB-like_sf"/>
</dbReference>
<dbReference type="InterPro" id="IPR004401">
    <property type="entry name" value="YbaB/EbfC"/>
</dbReference>
<dbReference type="NCBIfam" id="TIGR00103">
    <property type="entry name" value="DNA_YbaB_EbfC"/>
    <property type="match status" value="1"/>
</dbReference>
<dbReference type="PANTHER" id="PTHR33449">
    <property type="entry name" value="NUCLEOID-ASSOCIATED PROTEIN YBAB"/>
    <property type="match status" value="1"/>
</dbReference>
<dbReference type="PANTHER" id="PTHR33449:SF1">
    <property type="entry name" value="NUCLEOID-ASSOCIATED PROTEIN YBAB"/>
    <property type="match status" value="1"/>
</dbReference>
<dbReference type="Pfam" id="PF02575">
    <property type="entry name" value="YbaB_DNA_bd"/>
    <property type="match status" value="1"/>
</dbReference>
<dbReference type="PIRSF" id="PIRSF004555">
    <property type="entry name" value="UCP004555"/>
    <property type="match status" value="1"/>
</dbReference>
<dbReference type="SUPFAM" id="SSF82607">
    <property type="entry name" value="YbaB-like"/>
    <property type="match status" value="1"/>
</dbReference>
<name>Y4904_MYCSS</name>
<comment type="function">
    <text evidence="1">Binds to DNA and alters its conformation. May be involved in regulation of gene expression, nucleoid organization and DNA protection.</text>
</comment>
<comment type="subunit">
    <text evidence="1">Homodimer.</text>
</comment>
<comment type="subcellular location">
    <subcellularLocation>
        <location evidence="1">Cytoplasm</location>
        <location evidence="1">Nucleoid</location>
    </subcellularLocation>
</comment>
<comment type="similarity">
    <text evidence="1">Belongs to the YbaB/EbfC family.</text>
</comment>
<gene>
    <name type="ordered locus">Mmcs_4904</name>
</gene>
<reference key="1">
    <citation type="submission" date="2006-06" db="EMBL/GenBank/DDBJ databases">
        <title>Complete sequence of chromosome of Mycobacterium sp. MCS.</title>
        <authorList>
            <consortium name="US DOE Joint Genome Institute"/>
            <person name="Copeland A."/>
            <person name="Lucas S."/>
            <person name="Lapidus A."/>
            <person name="Barry K."/>
            <person name="Detter J.C."/>
            <person name="Glavina del Rio T."/>
            <person name="Hammon N."/>
            <person name="Israni S."/>
            <person name="Dalin E."/>
            <person name="Tice H."/>
            <person name="Pitluck S."/>
            <person name="Martinez M."/>
            <person name="Schmutz J."/>
            <person name="Larimer F."/>
            <person name="Land M."/>
            <person name="Hauser L."/>
            <person name="Kyrpides N."/>
            <person name="Kim E."/>
            <person name="Miller C.D."/>
            <person name="Hughes J.E."/>
            <person name="Anderson A.J."/>
            <person name="Sims R.C."/>
            <person name="Richardson P."/>
        </authorList>
    </citation>
    <scope>NUCLEOTIDE SEQUENCE [LARGE SCALE GENOMIC DNA]</scope>
    <source>
        <strain>MCS</strain>
    </source>
</reference>
<feature type="chain" id="PRO_1000003778" description="Nucleoid-associated protein Mmcs_4904">
    <location>
        <begin position="1"/>
        <end position="110"/>
    </location>
</feature>
<evidence type="ECO:0000255" key="1">
    <source>
        <dbReference type="HAMAP-Rule" id="MF_00274"/>
    </source>
</evidence>